<gene>
    <name type="primary">TIF1</name>
    <name type="synonym">TIF41</name>
    <name type="ordered locus">CNA07620</name>
</gene>
<accession>P0CQ70</accession>
<accession>Q55YU1</accession>
<accession>Q5KN60</accession>
<comment type="function">
    <text evidence="1">ATP-dependent RNA helicase which is a subunit of the eIF4F complex involved in cap recognition and is required for mRNA binding to ribosome. In the current model of translation initiation, eIF4A unwinds RNA secondary structures in the 5'-UTR of mRNAs which is necessary to allow efficient binding of the small ribosomal subunit, and subsequent scanning for the initiator codon (By similarity).</text>
</comment>
<comment type="catalytic activity">
    <reaction>
        <text>ATP + H2O = ADP + phosphate + H(+)</text>
        <dbReference type="Rhea" id="RHEA:13065"/>
        <dbReference type="ChEBI" id="CHEBI:15377"/>
        <dbReference type="ChEBI" id="CHEBI:15378"/>
        <dbReference type="ChEBI" id="CHEBI:30616"/>
        <dbReference type="ChEBI" id="CHEBI:43474"/>
        <dbReference type="ChEBI" id="CHEBI:456216"/>
        <dbReference type="EC" id="3.6.4.13"/>
    </reaction>
</comment>
<comment type="subunit">
    <text evidence="1">Component of the eIF4F complex, which composition varies with external and internal environmental conditions. It is composed of at least eIF4A, eIF4E and eIF4G (By similarity).</text>
</comment>
<comment type="subcellular location">
    <subcellularLocation>
        <location evidence="1">Cytoplasm</location>
    </subcellularLocation>
</comment>
<comment type="domain">
    <text>The Q motif is unique to and characteristic of the DEAD box family of RNA helicases and controls ATP binding and hydrolysis.</text>
</comment>
<comment type="similarity">
    <text evidence="4">Belongs to the DEAD box helicase family. eIF4A subfamily.</text>
</comment>
<feature type="chain" id="PRO_0000232134" description="ATP-dependent RNA helicase eIF4A">
    <location>
        <begin position="1"/>
        <end position="401"/>
    </location>
</feature>
<feature type="domain" description="Helicase ATP-binding" evidence="2">
    <location>
        <begin position="59"/>
        <end position="229"/>
    </location>
</feature>
<feature type="domain" description="Helicase C-terminal" evidence="3">
    <location>
        <begin position="240"/>
        <end position="401"/>
    </location>
</feature>
<feature type="short sequence motif" description="Q motif">
    <location>
        <begin position="28"/>
        <end position="56"/>
    </location>
</feature>
<feature type="short sequence motif" description="DEAD box">
    <location>
        <begin position="177"/>
        <end position="180"/>
    </location>
</feature>
<feature type="binding site" evidence="2">
    <location>
        <begin position="72"/>
        <end position="79"/>
    </location>
    <ligand>
        <name>ATP</name>
        <dbReference type="ChEBI" id="CHEBI:30616"/>
    </ligand>
</feature>
<organism>
    <name type="scientific">Cryptococcus neoformans var. neoformans serotype D (strain JEC21 / ATCC MYA-565)</name>
    <name type="common">Filobasidiella neoformans</name>
    <dbReference type="NCBI Taxonomy" id="214684"/>
    <lineage>
        <taxon>Eukaryota</taxon>
        <taxon>Fungi</taxon>
        <taxon>Dikarya</taxon>
        <taxon>Basidiomycota</taxon>
        <taxon>Agaricomycotina</taxon>
        <taxon>Tremellomycetes</taxon>
        <taxon>Tremellales</taxon>
        <taxon>Cryptococcaceae</taxon>
        <taxon>Cryptococcus</taxon>
        <taxon>Cryptococcus neoformans species complex</taxon>
    </lineage>
</organism>
<proteinExistence type="inferred from homology"/>
<reference key="1">
    <citation type="journal article" date="2005" name="Science">
        <title>The genome of the basidiomycetous yeast and human pathogen Cryptococcus neoformans.</title>
        <authorList>
            <person name="Loftus B.J."/>
            <person name="Fung E."/>
            <person name="Roncaglia P."/>
            <person name="Rowley D."/>
            <person name="Amedeo P."/>
            <person name="Bruno D."/>
            <person name="Vamathevan J."/>
            <person name="Miranda M."/>
            <person name="Anderson I.J."/>
            <person name="Fraser J.A."/>
            <person name="Allen J.E."/>
            <person name="Bosdet I.E."/>
            <person name="Brent M.R."/>
            <person name="Chiu R."/>
            <person name="Doering T.L."/>
            <person name="Donlin M.J."/>
            <person name="D'Souza C.A."/>
            <person name="Fox D.S."/>
            <person name="Grinberg V."/>
            <person name="Fu J."/>
            <person name="Fukushima M."/>
            <person name="Haas B.J."/>
            <person name="Huang J.C."/>
            <person name="Janbon G."/>
            <person name="Jones S.J.M."/>
            <person name="Koo H.L."/>
            <person name="Krzywinski M.I."/>
            <person name="Kwon-Chung K.J."/>
            <person name="Lengeler K.B."/>
            <person name="Maiti R."/>
            <person name="Marra M.A."/>
            <person name="Marra R.E."/>
            <person name="Mathewson C.A."/>
            <person name="Mitchell T.G."/>
            <person name="Pertea M."/>
            <person name="Riggs F.R."/>
            <person name="Salzberg S.L."/>
            <person name="Schein J.E."/>
            <person name="Shvartsbeyn A."/>
            <person name="Shin H."/>
            <person name="Shumway M."/>
            <person name="Specht C.A."/>
            <person name="Suh B.B."/>
            <person name="Tenney A."/>
            <person name="Utterback T.R."/>
            <person name="Wickes B.L."/>
            <person name="Wortman J.R."/>
            <person name="Wye N.H."/>
            <person name="Kronstad J.W."/>
            <person name="Lodge J.K."/>
            <person name="Heitman J."/>
            <person name="Davis R.W."/>
            <person name="Fraser C.M."/>
            <person name="Hyman R.W."/>
        </authorList>
    </citation>
    <scope>NUCLEOTIDE SEQUENCE [LARGE SCALE GENOMIC DNA]</scope>
    <source>
        <strain>JEC21 / ATCC MYA-565</strain>
    </source>
</reference>
<evidence type="ECO:0000250" key="1"/>
<evidence type="ECO:0000255" key="2">
    <source>
        <dbReference type="PROSITE-ProRule" id="PRU00541"/>
    </source>
</evidence>
<evidence type="ECO:0000255" key="3">
    <source>
        <dbReference type="PROSITE-ProRule" id="PRU00542"/>
    </source>
</evidence>
<evidence type="ECO:0000305" key="4"/>
<sequence length="401" mass="45144">MSDTKGAAEQGLQIDGDLINSNWNEVVDNFDDMKLKGELLRGIYAYGFERPSAIQQRAIMPIVTGRDCIAQAQSGTGKTATFSVSILQRIDTTVKKTQALVLAPTRELAQQIQKVVIALGDYLNVDCHACVGGTAVREDIARLNEGPHIVVGTPGRVFDMINRGALKTEAVMMFCLDEADEMLSTGFKESIYEIFQLLPGETQVVLLSATMAPEVLDVTKKFMRDPIRILVKKDELTLEGIRQFYINVEKEEWKLETLCDLYETVTITQAVIFCSTRRKVDWLTQQLHDRQFTVSAMHGDMKQEEREVIMKEFRSGSSRVLITTDLLARGIDVQQVSLVINYDLPSSKENYIHRIGRGGRFGRKGVAINFVSNEDKNMLEEIETYYNTQVEEMPLNVADLI</sequence>
<name>IF4A_CRYNJ</name>
<dbReference type="EC" id="3.6.4.13"/>
<dbReference type="EMBL" id="AE017341">
    <property type="protein sequence ID" value="AAW41293.1"/>
    <property type="molecule type" value="Genomic_DNA"/>
</dbReference>
<dbReference type="RefSeq" id="XP_567112.1">
    <property type="nucleotide sequence ID" value="XM_567112.1"/>
</dbReference>
<dbReference type="SMR" id="P0CQ70"/>
<dbReference type="FunCoup" id="P0CQ70">
    <property type="interactions" value="422"/>
</dbReference>
<dbReference type="STRING" id="214684.P0CQ70"/>
<dbReference type="PaxDb" id="214684-P0CQ70"/>
<dbReference type="EnsemblFungi" id="AAW41293">
    <property type="protein sequence ID" value="AAW41293"/>
    <property type="gene ID" value="CNA07620"/>
</dbReference>
<dbReference type="GeneID" id="3253907"/>
<dbReference type="KEGG" id="cne:CNA07620"/>
<dbReference type="VEuPathDB" id="FungiDB:CNA07620"/>
<dbReference type="eggNOG" id="KOG0327">
    <property type="taxonomic scope" value="Eukaryota"/>
</dbReference>
<dbReference type="HOGENOM" id="CLU_003041_1_0_1"/>
<dbReference type="InParanoid" id="P0CQ70"/>
<dbReference type="OMA" id="FGCQALV"/>
<dbReference type="OrthoDB" id="10265785at2759"/>
<dbReference type="Proteomes" id="UP000002149">
    <property type="component" value="Chromosome 1"/>
</dbReference>
<dbReference type="GO" id="GO:0010494">
    <property type="term" value="C:cytoplasmic stress granule"/>
    <property type="evidence" value="ECO:0000318"/>
    <property type="project" value="GO_Central"/>
</dbReference>
<dbReference type="GO" id="GO:0005524">
    <property type="term" value="F:ATP binding"/>
    <property type="evidence" value="ECO:0007669"/>
    <property type="project" value="UniProtKB-KW"/>
</dbReference>
<dbReference type="GO" id="GO:0016887">
    <property type="term" value="F:ATP hydrolysis activity"/>
    <property type="evidence" value="ECO:0007669"/>
    <property type="project" value="RHEA"/>
</dbReference>
<dbReference type="GO" id="GO:0003723">
    <property type="term" value="F:RNA binding"/>
    <property type="evidence" value="ECO:0007669"/>
    <property type="project" value="UniProtKB-KW"/>
</dbReference>
<dbReference type="GO" id="GO:0003724">
    <property type="term" value="F:RNA helicase activity"/>
    <property type="evidence" value="ECO:0007669"/>
    <property type="project" value="UniProtKB-EC"/>
</dbReference>
<dbReference type="GO" id="GO:0003743">
    <property type="term" value="F:translation initiation factor activity"/>
    <property type="evidence" value="ECO:0000318"/>
    <property type="project" value="GO_Central"/>
</dbReference>
<dbReference type="GO" id="GO:0002183">
    <property type="term" value="P:cytoplasmic translational initiation"/>
    <property type="evidence" value="ECO:0000318"/>
    <property type="project" value="GO_Central"/>
</dbReference>
<dbReference type="CDD" id="cd18046">
    <property type="entry name" value="DEADc_EIF4AII_EIF4AI_DDX2"/>
    <property type="match status" value="1"/>
</dbReference>
<dbReference type="CDD" id="cd18787">
    <property type="entry name" value="SF2_C_DEAD"/>
    <property type="match status" value="1"/>
</dbReference>
<dbReference type="FunFam" id="3.40.50.300:FF:000089">
    <property type="entry name" value="Eukaryotic initiation factor 4A-II"/>
    <property type="match status" value="1"/>
</dbReference>
<dbReference type="FunFam" id="3.40.50.300:FF:000031">
    <property type="entry name" value="Eukaryotic initiation factor 4A-III"/>
    <property type="match status" value="1"/>
</dbReference>
<dbReference type="Gene3D" id="3.40.50.300">
    <property type="entry name" value="P-loop containing nucleotide triphosphate hydrolases"/>
    <property type="match status" value="2"/>
</dbReference>
<dbReference type="InterPro" id="IPR011545">
    <property type="entry name" value="DEAD/DEAH_box_helicase_dom"/>
</dbReference>
<dbReference type="InterPro" id="IPR044728">
    <property type="entry name" value="EIF4A_DEADc"/>
</dbReference>
<dbReference type="InterPro" id="IPR014001">
    <property type="entry name" value="Helicase_ATP-bd"/>
</dbReference>
<dbReference type="InterPro" id="IPR001650">
    <property type="entry name" value="Helicase_C-like"/>
</dbReference>
<dbReference type="InterPro" id="IPR027417">
    <property type="entry name" value="P-loop_NTPase"/>
</dbReference>
<dbReference type="InterPro" id="IPR014014">
    <property type="entry name" value="RNA_helicase_DEAD_Q_motif"/>
</dbReference>
<dbReference type="PANTHER" id="PTHR47958">
    <property type="entry name" value="ATP-DEPENDENT RNA HELICASE DBP3"/>
    <property type="match status" value="1"/>
</dbReference>
<dbReference type="Pfam" id="PF00270">
    <property type="entry name" value="DEAD"/>
    <property type="match status" value="1"/>
</dbReference>
<dbReference type="Pfam" id="PF00271">
    <property type="entry name" value="Helicase_C"/>
    <property type="match status" value="1"/>
</dbReference>
<dbReference type="SMART" id="SM00487">
    <property type="entry name" value="DEXDc"/>
    <property type="match status" value="1"/>
</dbReference>
<dbReference type="SMART" id="SM00490">
    <property type="entry name" value="HELICc"/>
    <property type="match status" value="1"/>
</dbReference>
<dbReference type="SUPFAM" id="SSF52540">
    <property type="entry name" value="P-loop containing nucleoside triphosphate hydrolases"/>
    <property type="match status" value="1"/>
</dbReference>
<dbReference type="PROSITE" id="PS51192">
    <property type="entry name" value="HELICASE_ATP_BIND_1"/>
    <property type="match status" value="1"/>
</dbReference>
<dbReference type="PROSITE" id="PS51194">
    <property type="entry name" value="HELICASE_CTER"/>
    <property type="match status" value="1"/>
</dbReference>
<dbReference type="PROSITE" id="PS51195">
    <property type="entry name" value="Q_MOTIF"/>
    <property type="match status" value="1"/>
</dbReference>
<keyword id="KW-0067">ATP-binding</keyword>
<keyword id="KW-0963">Cytoplasm</keyword>
<keyword id="KW-0347">Helicase</keyword>
<keyword id="KW-0378">Hydrolase</keyword>
<keyword id="KW-0396">Initiation factor</keyword>
<keyword id="KW-0547">Nucleotide-binding</keyword>
<keyword id="KW-0648">Protein biosynthesis</keyword>
<keyword id="KW-1185">Reference proteome</keyword>
<keyword id="KW-0694">RNA-binding</keyword>
<protein>
    <recommendedName>
        <fullName>ATP-dependent RNA helicase eIF4A</fullName>
        <ecNumber>3.6.4.13</ecNumber>
    </recommendedName>
    <alternativeName>
        <fullName>Eukaryotic initiation factor 4A</fullName>
        <shortName>eIF-4A</shortName>
    </alternativeName>
    <alternativeName>
        <fullName>Translation initiation factor 1</fullName>
    </alternativeName>
</protein>